<proteinExistence type="inferred from homology"/>
<keyword id="KW-0687">Ribonucleoprotein</keyword>
<keyword id="KW-0689">Ribosomal protein</keyword>
<protein>
    <recommendedName>
        <fullName evidence="1">Large ribosomal subunit protein bL35</fullName>
    </recommendedName>
    <alternativeName>
        <fullName evidence="3">50S ribosomal protein L35</fullName>
    </alternativeName>
</protein>
<feature type="chain" id="PRO_1000127404" description="Large ribosomal subunit protein bL35">
    <location>
        <begin position="1"/>
        <end position="65"/>
    </location>
</feature>
<feature type="region of interest" description="Disordered" evidence="2">
    <location>
        <begin position="1"/>
        <end position="22"/>
    </location>
</feature>
<feature type="compositionally biased region" description="Basic residues" evidence="2">
    <location>
        <begin position="10"/>
        <end position="22"/>
    </location>
</feature>
<organism>
    <name type="scientific">Salmonella gallinarum (strain 287/91 / NCTC 13346)</name>
    <dbReference type="NCBI Taxonomy" id="550538"/>
    <lineage>
        <taxon>Bacteria</taxon>
        <taxon>Pseudomonadati</taxon>
        <taxon>Pseudomonadota</taxon>
        <taxon>Gammaproteobacteria</taxon>
        <taxon>Enterobacterales</taxon>
        <taxon>Enterobacteriaceae</taxon>
        <taxon>Salmonella</taxon>
    </lineage>
</organism>
<reference key="1">
    <citation type="journal article" date="2008" name="Genome Res.">
        <title>Comparative genome analysis of Salmonella enteritidis PT4 and Salmonella gallinarum 287/91 provides insights into evolutionary and host adaptation pathways.</title>
        <authorList>
            <person name="Thomson N.R."/>
            <person name="Clayton D.J."/>
            <person name="Windhorst D."/>
            <person name="Vernikos G."/>
            <person name="Davidson S."/>
            <person name="Churcher C."/>
            <person name="Quail M.A."/>
            <person name="Stevens M."/>
            <person name="Jones M.A."/>
            <person name="Watson M."/>
            <person name="Barron A."/>
            <person name="Layton A."/>
            <person name="Pickard D."/>
            <person name="Kingsley R.A."/>
            <person name="Bignell A."/>
            <person name="Clark L."/>
            <person name="Harris B."/>
            <person name="Ormond D."/>
            <person name="Abdellah Z."/>
            <person name="Brooks K."/>
            <person name="Cherevach I."/>
            <person name="Chillingworth T."/>
            <person name="Woodward J."/>
            <person name="Norberczak H."/>
            <person name="Lord A."/>
            <person name="Arrowsmith C."/>
            <person name="Jagels K."/>
            <person name="Moule S."/>
            <person name="Mungall K."/>
            <person name="Saunders M."/>
            <person name="Whitehead S."/>
            <person name="Chabalgoity J.A."/>
            <person name="Maskell D."/>
            <person name="Humphreys T."/>
            <person name="Roberts M."/>
            <person name="Barrow P.A."/>
            <person name="Dougan G."/>
            <person name="Parkhill J."/>
        </authorList>
    </citation>
    <scope>NUCLEOTIDE SEQUENCE [LARGE SCALE GENOMIC DNA]</scope>
    <source>
        <strain>287/91 / NCTC 13346</strain>
    </source>
</reference>
<name>RL35_SALG2</name>
<dbReference type="EMBL" id="AM933173">
    <property type="protein sequence ID" value="CAR37639.1"/>
    <property type="molecule type" value="Genomic_DNA"/>
</dbReference>
<dbReference type="RefSeq" id="WP_001124225.1">
    <property type="nucleotide sequence ID" value="NC_011274.1"/>
</dbReference>
<dbReference type="SMR" id="B5RAX1"/>
<dbReference type="GeneID" id="97601348"/>
<dbReference type="KEGG" id="seg:SG1782"/>
<dbReference type="HOGENOM" id="CLU_169643_1_1_6"/>
<dbReference type="Proteomes" id="UP000008321">
    <property type="component" value="Chromosome"/>
</dbReference>
<dbReference type="GO" id="GO:0022625">
    <property type="term" value="C:cytosolic large ribosomal subunit"/>
    <property type="evidence" value="ECO:0007669"/>
    <property type="project" value="TreeGrafter"/>
</dbReference>
<dbReference type="GO" id="GO:0003735">
    <property type="term" value="F:structural constituent of ribosome"/>
    <property type="evidence" value="ECO:0007669"/>
    <property type="project" value="InterPro"/>
</dbReference>
<dbReference type="GO" id="GO:0006412">
    <property type="term" value="P:translation"/>
    <property type="evidence" value="ECO:0007669"/>
    <property type="project" value="UniProtKB-UniRule"/>
</dbReference>
<dbReference type="FunFam" id="4.10.410.60:FF:000001">
    <property type="entry name" value="50S ribosomal protein L35"/>
    <property type="match status" value="1"/>
</dbReference>
<dbReference type="Gene3D" id="4.10.410.60">
    <property type="match status" value="1"/>
</dbReference>
<dbReference type="HAMAP" id="MF_00514">
    <property type="entry name" value="Ribosomal_bL35"/>
    <property type="match status" value="1"/>
</dbReference>
<dbReference type="InterPro" id="IPR001706">
    <property type="entry name" value="Ribosomal_bL35"/>
</dbReference>
<dbReference type="InterPro" id="IPR021137">
    <property type="entry name" value="Ribosomal_bL35-like"/>
</dbReference>
<dbReference type="InterPro" id="IPR018265">
    <property type="entry name" value="Ribosomal_bL35_CS"/>
</dbReference>
<dbReference type="InterPro" id="IPR037229">
    <property type="entry name" value="Ribosomal_bL35_sf"/>
</dbReference>
<dbReference type="NCBIfam" id="TIGR00001">
    <property type="entry name" value="rpmI_bact"/>
    <property type="match status" value="1"/>
</dbReference>
<dbReference type="PANTHER" id="PTHR33343">
    <property type="entry name" value="54S RIBOSOMAL PROTEIN BL35M"/>
    <property type="match status" value="1"/>
</dbReference>
<dbReference type="PANTHER" id="PTHR33343:SF1">
    <property type="entry name" value="LARGE RIBOSOMAL SUBUNIT PROTEIN BL35M"/>
    <property type="match status" value="1"/>
</dbReference>
<dbReference type="Pfam" id="PF01632">
    <property type="entry name" value="Ribosomal_L35p"/>
    <property type="match status" value="1"/>
</dbReference>
<dbReference type="PRINTS" id="PR00064">
    <property type="entry name" value="RIBOSOMALL35"/>
</dbReference>
<dbReference type="SUPFAM" id="SSF143034">
    <property type="entry name" value="L35p-like"/>
    <property type="match status" value="1"/>
</dbReference>
<dbReference type="PROSITE" id="PS00936">
    <property type="entry name" value="RIBOSOMAL_L35"/>
    <property type="match status" value="1"/>
</dbReference>
<comment type="similarity">
    <text evidence="1">Belongs to the bacterial ribosomal protein bL35 family.</text>
</comment>
<gene>
    <name evidence="1" type="primary">rpmI</name>
    <name type="ordered locus">SG1782</name>
</gene>
<accession>B5RAX1</accession>
<evidence type="ECO:0000255" key="1">
    <source>
        <dbReference type="HAMAP-Rule" id="MF_00514"/>
    </source>
</evidence>
<evidence type="ECO:0000256" key="2">
    <source>
        <dbReference type="SAM" id="MobiDB-lite"/>
    </source>
</evidence>
<evidence type="ECO:0000305" key="3"/>
<sequence length="65" mass="7289">MPKIKTVRGAAKRFKKTGKGGFKHKHANLRHILTKKATKRKRHLRPKAMVSKGDLGLVIACLPYA</sequence>